<evidence type="ECO:0000250" key="1"/>
<evidence type="ECO:0000269" key="2">
    <source>
    </source>
</evidence>
<evidence type="ECO:0000305" key="3"/>
<evidence type="ECO:0007829" key="4">
    <source>
        <dbReference type="PDB" id="2G9I"/>
    </source>
</evidence>
<evidence type="ECO:0007829" key="5">
    <source>
        <dbReference type="PDB" id="2PHN"/>
    </source>
</evidence>
<evidence type="ECO:0007829" key="6">
    <source>
        <dbReference type="PDB" id="7ULD"/>
    </source>
</evidence>
<gene>
    <name type="primary">cofE</name>
    <name type="ordered locus">AF_2256</name>
</gene>
<dbReference type="EC" id="6.3.2.31"/>
<dbReference type="EC" id="6.3.2.34"/>
<dbReference type="EMBL" id="AE000782">
    <property type="protein sequence ID" value="AAB89001.1"/>
    <property type="molecule type" value="Genomic_DNA"/>
</dbReference>
<dbReference type="PIR" id="H69531">
    <property type="entry name" value="H69531"/>
</dbReference>
<dbReference type="RefSeq" id="WP_010879745.1">
    <property type="nucleotide sequence ID" value="NC_000917.1"/>
</dbReference>
<dbReference type="PDB" id="2G9I">
    <property type="method" value="X-ray"/>
    <property type="resolution" value="2.50 A"/>
    <property type="chains" value="A/B=1-249"/>
</dbReference>
<dbReference type="PDB" id="2PHN">
    <property type="method" value="X-ray"/>
    <property type="resolution" value="1.35 A"/>
    <property type="chains" value="A/B=1-249"/>
</dbReference>
<dbReference type="PDB" id="7ULD">
    <property type="method" value="X-ray"/>
    <property type="resolution" value="1.30 A"/>
    <property type="chains" value="A=1-249"/>
</dbReference>
<dbReference type="PDB" id="7ULE">
    <property type="method" value="X-ray"/>
    <property type="resolution" value="1.70 A"/>
    <property type="chains" value="A=1-249"/>
</dbReference>
<dbReference type="PDB" id="7ULF">
    <property type="method" value="X-ray"/>
    <property type="resolution" value="1.61 A"/>
    <property type="chains" value="A=1-249"/>
</dbReference>
<dbReference type="PDB" id="8G8P">
    <property type="method" value="X-ray"/>
    <property type="resolution" value="1.83 A"/>
    <property type="chains" value="AAA=1-249"/>
</dbReference>
<dbReference type="PDBsum" id="2G9I"/>
<dbReference type="PDBsum" id="2PHN"/>
<dbReference type="PDBsum" id="7ULD"/>
<dbReference type="PDBsum" id="7ULE"/>
<dbReference type="PDBsum" id="7ULF"/>
<dbReference type="PDBsum" id="8G8P"/>
<dbReference type="SMR" id="O28028"/>
<dbReference type="STRING" id="224325.AF_2256"/>
<dbReference type="PaxDb" id="224325-AF_2256"/>
<dbReference type="EnsemblBacteria" id="AAB89001">
    <property type="protein sequence ID" value="AAB89001"/>
    <property type="gene ID" value="AF_2256"/>
</dbReference>
<dbReference type="GeneID" id="24796019"/>
<dbReference type="KEGG" id="afu:AF_2256"/>
<dbReference type="eggNOG" id="arCOG02714">
    <property type="taxonomic scope" value="Archaea"/>
</dbReference>
<dbReference type="HOGENOM" id="CLU_051152_1_1_2"/>
<dbReference type="OrthoDB" id="11383at2157"/>
<dbReference type="PhylomeDB" id="O28028"/>
<dbReference type="BRENDA" id="6.3.2.31">
    <property type="organism ID" value="11304"/>
</dbReference>
<dbReference type="BRENDA" id="6.3.2.34">
    <property type="organism ID" value="11304"/>
</dbReference>
<dbReference type="UniPathway" id="UPA00071"/>
<dbReference type="EvolutionaryTrace" id="O28028"/>
<dbReference type="Proteomes" id="UP000002199">
    <property type="component" value="Chromosome"/>
</dbReference>
<dbReference type="GO" id="GO:0052618">
    <property type="term" value="F:coenzyme F420-0:L-glutamate ligase activity"/>
    <property type="evidence" value="ECO:0007669"/>
    <property type="project" value="UniProtKB-UniRule"/>
</dbReference>
<dbReference type="GO" id="GO:0052619">
    <property type="term" value="F:coenzyme F420-1:gamma-L-glutamate ligase activity"/>
    <property type="evidence" value="ECO:0007669"/>
    <property type="project" value="UniProtKB-UniRule"/>
</dbReference>
<dbReference type="GO" id="GO:0005525">
    <property type="term" value="F:GTP binding"/>
    <property type="evidence" value="ECO:0007669"/>
    <property type="project" value="UniProtKB-KW"/>
</dbReference>
<dbReference type="GO" id="GO:0046872">
    <property type="term" value="F:metal ion binding"/>
    <property type="evidence" value="ECO:0007669"/>
    <property type="project" value="UniProtKB-KW"/>
</dbReference>
<dbReference type="GO" id="GO:0052645">
    <property type="term" value="P:F420-0 metabolic process"/>
    <property type="evidence" value="ECO:0007669"/>
    <property type="project" value="UniProtKB-UniRule"/>
</dbReference>
<dbReference type="Gene3D" id="3.30.1330.100">
    <property type="entry name" value="CofE-like"/>
    <property type="match status" value="1"/>
</dbReference>
<dbReference type="Gene3D" id="3.90.1660.10">
    <property type="entry name" value="CofE-like domain"/>
    <property type="match status" value="1"/>
</dbReference>
<dbReference type="HAMAP" id="MF_01258">
    <property type="entry name" value="F420_ligase_CofE"/>
    <property type="match status" value="1"/>
</dbReference>
<dbReference type="InterPro" id="IPR008225">
    <property type="entry name" value="F420-0_g-glutamyl_ligase"/>
</dbReference>
<dbReference type="InterPro" id="IPR002847">
    <property type="entry name" value="F420-0_gamma-glut_ligase-dom"/>
</dbReference>
<dbReference type="InterPro" id="IPR023659">
    <property type="entry name" value="F420_ligase_CofE_arc"/>
</dbReference>
<dbReference type="NCBIfam" id="TIGR01916">
    <property type="entry name" value="F420_cofE"/>
    <property type="match status" value="1"/>
</dbReference>
<dbReference type="NCBIfam" id="NF009809">
    <property type="entry name" value="PRK13293.1"/>
    <property type="match status" value="1"/>
</dbReference>
<dbReference type="PANTHER" id="PTHR47917">
    <property type="match status" value="1"/>
</dbReference>
<dbReference type="PANTHER" id="PTHR47917:SF1">
    <property type="entry name" value="COENZYME F420:L-GLUTAMATE LIGASE"/>
    <property type="match status" value="1"/>
</dbReference>
<dbReference type="Pfam" id="PF01996">
    <property type="entry name" value="F420_ligase"/>
    <property type="match status" value="1"/>
</dbReference>
<dbReference type="SUPFAM" id="SSF144010">
    <property type="entry name" value="CofE-like"/>
    <property type="match status" value="1"/>
</dbReference>
<feature type="chain" id="PRO_0000145785" description="Coenzyme F420:L-glutamate ligase">
    <location>
        <begin position="1"/>
        <end position="249"/>
    </location>
</feature>
<feature type="binding site">
    <location>
        <begin position="11"/>
        <end position="14"/>
    </location>
    <ligand>
        <name>GTP</name>
        <dbReference type="ChEBI" id="CHEBI:37565"/>
    </ligand>
</feature>
<feature type="binding site">
    <location>
        <begin position="40"/>
        <end position="41"/>
    </location>
    <ligand>
        <name>GTP</name>
        <dbReference type="ChEBI" id="CHEBI:37565"/>
    </ligand>
</feature>
<feature type="binding site">
    <location>
        <position position="45"/>
    </location>
    <ligand>
        <name>GTP</name>
        <dbReference type="ChEBI" id="CHEBI:37565"/>
    </ligand>
</feature>
<feature type="binding site">
    <location>
        <position position="109"/>
    </location>
    <ligand>
        <name>a divalent metal cation</name>
        <dbReference type="ChEBI" id="CHEBI:60240"/>
        <label>1</label>
    </ligand>
</feature>
<feature type="binding site">
    <location>
        <position position="112"/>
    </location>
    <ligand>
        <name>GTP</name>
        <dbReference type="ChEBI" id="CHEBI:37565"/>
    </ligand>
</feature>
<feature type="binding site">
    <location>
        <position position="150"/>
    </location>
    <ligand>
        <name>a divalent metal cation</name>
        <dbReference type="ChEBI" id="CHEBI:60240"/>
        <label>1</label>
    </ligand>
</feature>
<feature type="binding site">
    <location>
        <position position="151"/>
    </location>
    <ligand>
        <name>a divalent metal cation</name>
        <dbReference type="ChEBI" id="CHEBI:60240"/>
        <label>2</label>
    </ligand>
</feature>
<feature type="binding site">
    <location>
        <begin position="206"/>
        <end position="213"/>
    </location>
    <ligand>
        <name>GTP</name>
        <dbReference type="ChEBI" id="CHEBI:37565"/>
    </ligand>
</feature>
<feature type="binding site">
    <location>
        <position position="208"/>
    </location>
    <ligand>
        <name>a divalent metal cation</name>
        <dbReference type="ChEBI" id="CHEBI:60240"/>
        <label>2</label>
    </ligand>
</feature>
<feature type="strand" evidence="6">
    <location>
        <begin position="4"/>
        <end position="7"/>
    </location>
</feature>
<feature type="helix" evidence="6">
    <location>
        <begin position="20"/>
        <end position="25"/>
    </location>
</feature>
<feature type="strand" evidence="6">
    <location>
        <begin position="35"/>
        <end position="39"/>
    </location>
</feature>
<feature type="helix" evidence="6">
    <location>
        <begin position="40"/>
        <end position="46"/>
    </location>
</feature>
<feature type="strand" evidence="6">
    <location>
        <begin position="50"/>
        <end position="52"/>
    </location>
</feature>
<feature type="helix" evidence="6">
    <location>
        <begin position="53"/>
        <end position="55"/>
    </location>
</feature>
<feature type="helix" evidence="6">
    <location>
        <begin position="60"/>
        <end position="69"/>
    </location>
</feature>
<feature type="helix" evidence="6">
    <location>
        <begin position="73"/>
        <end position="81"/>
    </location>
</feature>
<feature type="strand" evidence="6">
    <location>
        <begin position="83"/>
        <end position="88"/>
    </location>
</feature>
<feature type="strand" evidence="6">
    <location>
        <begin position="90"/>
        <end position="92"/>
    </location>
</feature>
<feature type="strand" evidence="6">
    <location>
        <begin position="94"/>
        <end position="97"/>
    </location>
</feature>
<feature type="strand" evidence="6">
    <location>
        <begin position="102"/>
        <end position="104"/>
    </location>
</feature>
<feature type="helix" evidence="6">
    <location>
        <begin position="105"/>
        <end position="107"/>
    </location>
</feature>
<feature type="strand" evidence="5">
    <location>
        <begin position="111"/>
        <end position="113"/>
    </location>
</feature>
<feature type="strand" evidence="6">
    <location>
        <begin position="117"/>
        <end position="119"/>
    </location>
</feature>
<feature type="helix" evidence="6">
    <location>
        <begin position="125"/>
        <end position="140"/>
    </location>
</feature>
<feature type="strand" evidence="6">
    <location>
        <begin position="145"/>
        <end position="152"/>
    </location>
</feature>
<feature type="strand" evidence="6">
    <location>
        <begin position="155"/>
        <end position="157"/>
    </location>
</feature>
<feature type="strand" evidence="6">
    <location>
        <begin position="161"/>
        <end position="170"/>
    </location>
</feature>
<feature type="strand" evidence="4">
    <location>
        <begin position="172"/>
        <end position="175"/>
    </location>
</feature>
<feature type="strand" evidence="4">
    <location>
        <begin position="191"/>
        <end position="193"/>
    </location>
</feature>
<feature type="helix" evidence="6">
    <location>
        <begin position="194"/>
        <end position="206"/>
    </location>
</feature>
<feature type="strand" evidence="6">
    <location>
        <begin position="208"/>
        <end position="211"/>
    </location>
</feature>
<feature type="strand" evidence="6">
    <location>
        <begin position="215"/>
        <end position="220"/>
    </location>
</feature>
<feature type="helix" evidence="6">
    <location>
        <begin position="229"/>
        <end position="231"/>
    </location>
</feature>
<feature type="turn" evidence="6">
    <location>
        <begin position="236"/>
        <end position="238"/>
    </location>
</feature>
<feature type="helix" evidence="6">
    <location>
        <begin position="240"/>
        <end position="248"/>
    </location>
</feature>
<keyword id="KW-0002">3D-structure</keyword>
<keyword id="KW-0342">GTP-binding</keyword>
<keyword id="KW-0436">Ligase</keyword>
<keyword id="KW-0460">Magnesium</keyword>
<keyword id="KW-0464">Manganese</keyword>
<keyword id="KW-0479">Metal-binding</keyword>
<keyword id="KW-0547">Nucleotide-binding</keyword>
<keyword id="KW-0630">Potassium</keyword>
<keyword id="KW-1185">Reference proteome</keyword>
<accession>O28028</accession>
<organism>
    <name type="scientific">Archaeoglobus fulgidus (strain ATCC 49558 / DSM 4304 / JCM 9628 / NBRC 100126 / VC-16)</name>
    <dbReference type="NCBI Taxonomy" id="224325"/>
    <lineage>
        <taxon>Archaea</taxon>
        <taxon>Methanobacteriati</taxon>
        <taxon>Methanobacteriota</taxon>
        <taxon>Archaeoglobi</taxon>
        <taxon>Archaeoglobales</taxon>
        <taxon>Archaeoglobaceae</taxon>
        <taxon>Archaeoglobus</taxon>
    </lineage>
</organism>
<protein>
    <recommendedName>
        <fullName>Coenzyme F420:L-glutamate ligase</fullName>
        <ecNumber>6.3.2.31</ecNumber>
        <ecNumber>6.3.2.34</ecNumber>
    </recommendedName>
    <alternativeName>
        <fullName>Coenzyme F420-0:L-glutamate ligase</fullName>
    </alternativeName>
    <alternativeName>
        <fullName>Coenzyme F420-1:gamma-L-glutamate ligase</fullName>
    </alternativeName>
    <alternativeName>
        <fullName>F420:glutamyl ligase</fullName>
    </alternativeName>
</protein>
<proteinExistence type="evidence at protein level"/>
<comment type="function">
    <text evidence="2">Catalyzes the GTP-dependent successive addition of two L-glutamates to the L-lactyl phosphodiester of 7,8-didemethyl-8-hydroxy-5-deazariboflavin (F420-0) to form coenzyme F420-0-glutamyl-glutamate (F420-2), with a gamma-linkage between the two glutamates. May be able to add up to four gamma-linked glutamates, since F420-4 is a species that was isolated from A.fulgidus.</text>
</comment>
<comment type="catalytic activity">
    <reaction evidence="2">
        <text>oxidized coenzyme F420-0 + GTP + L-glutamate = oxidized coenzyme F420-1 + GDP + phosphate + H(+)</text>
        <dbReference type="Rhea" id="RHEA:30555"/>
        <dbReference type="ChEBI" id="CHEBI:15378"/>
        <dbReference type="ChEBI" id="CHEBI:29985"/>
        <dbReference type="ChEBI" id="CHEBI:37565"/>
        <dbReference type="ChEBI" id="CHEBI:43474"/>
        <dbReference type="ChEBI" id="CHEBI:58189"/>
        <dbReference type="ChEBI" id="CHEBI:59907"/>
        <dbReference type="ChEBI" id="CHEBI:59920"/>
        <dbReference type="EC" id="6.3.2.31"/>
    </reaction>
</comment>
<comment type="catalytic activity">
    <reaction evidence="2">
        <text>oxidized coenzyme F420-1 + GTP + L-glutamate = oxidized coenzyme F420-2 + GDP + phosphate + H(+)</text>
        <dbReference type="Rhea" id="RHEA:30523"/>
        <dbReference type="ChEBI" id="CHEBI:15378"/>
        <dbReference type="ChEBI" id="CHEBI:29985"/>
        <dbReference type="ChEBI" id="CHEBI:37565"/>
        <dbReference type="ChEBI" id="CHEBI:43474"/>
        <dbReference type="ChEBI" id="CHEBI:57922"/>
        <dbReference type="ChEBI" id="CHEBI:58189"/>
        <dbReference type="ChEBI" id="CHEBI:59920"/>
        <dbReference type="EC" id="6.3.2.34"/>
    </reaction>
</comment>
<comment type="cofactor">
    <cofactor evidence="2">
        <name>Mg(2+)</name>
        <dbReference type="ChEBI" id="CHEBI:18420"/>
    </cofactor>
    <cofactor evidence="2">
        <name>Mn(2+)</name>
        <dbReference type="ChEBI" id="CHEBI:29035"/>
    </cofactor>
    <text evidence="2">Binds 2 divalent metal cations per subunit. The ions could be magnesium and/or manganese.</text>
</comment>
<comment type="cofactor">
    <cofactor evidence="1">
        <name>K(+)</name>
        <dbReference type="ChEBI" id="CHEBI:29103"/>
    </cofactor>
    <text evidence="1">Monovalent cation. The ion could be potassium.</text>
</comment>
<comment type="pathway">
    <text>Cofactor biosynthesis; coenzyme F420 biosynthesis.</text>
</comment>
<comment type="subunit">
    <text evidence="2">Homodimer.</text>
</comment>
<comment type="similarity">
    <text evidence="3">Belongs to the CofE family.</text>
</comment>
<sequence length="249" mass="27261">MRVEVFPVEGLPLIKEGDDLAELISSRVRFEDGDVLVVCSTVISKAEGRIRRLEEFNPSERAKEIAARIGKPAEFVQAVLEESEEVLLDFPFLLVKAKFGNVCVNAGIDASNVEEGSLLLPPLDPDGSAEKLRRRILELTGKRVGVIITDTNGRCFRRGVVGFAIGISGVKAMKDWIGRKDLYGRELEVTVECVADEIAAFANLLMGEGGDGIPAVVVRGLNVAGEGSMEEIYRSEEEDVIRRCLKRCL</sequence>
<name>COFE_ARCFU</name>
<reference key="1">
    <citation type="journal article" date="1997" name="Nature">
        <title>The complete genome sequence of the hyperthermophilic, sulphate-reducing archaeon Archaeoglobus fulgidus.</title>
        <authorList>
            <person name="Klenk H.-P."/>
            <person name="Clayton R.A."/>
            <person name="Tomb J.-F."/>
            <person name="White O."/>
            <person name="Nelson K.E."/>
            <person name="Ketchum K.A."/>
            <person name="Dodson R.J."/>
            <person name="Gwinn M.L."/>
            <person name="Hickey E.K."/>
            <person name="Peterson J.D."/>
            <person name="Richardson D.L."/>
            <person name="Kerlavage A.R."/>
            <person name="Graham D.E."/>
            <person name="Kyrpides N.C."/>
            <person name="Fleischmann R.D."/>
            <person name="Quackenbush J."/>
            <person name="Lee N.H."/>
            <person name="Sutton G.G."/>
            <person name="Gill S.R."/>
            <person name="Kirkness E.F."/>
            <person name="Dougherty B.A."/>
            <person name="McKenney K."/>
            <person name="Adams M.D."/>
            <person name="Loftus B.J."/>
            <person name="Peterson S.N."/>
            <person name="Reich C.I."/>
            <person name="McNeil L.K."/>
            <person name="Badger J.H."/>
            <person name="Glodek A."/>
            <person name="Zhou L."/>
            <person name="Overbeek R."/>
            <person name="Gocayne J.D."/>
            <person name="Weidman J.F."/>
            <person name="McDonald L.A."/>
            <person name="Utterback T.R."/>
            <person name="Cotton M.D."/>
            <person name="Spriggs T."/>
            <person name="Artiach P."/>
            <person name="Kaine B.P."/>
            <person name="Sykes S.M."/>
            <person name="Sadow P.W."/>
            <person name="D'Andrea K.P."/>
            <person name="Bowman C."/>
            <person name="Fujii C."/>
            <person name="Garland S.A."/>
            <person name="Mason T.M."/>
            <person name="Olsen G.J."/>
            <person name="Fraser C.M."/>
            <person name="Smith H.O."/>
            <person name="Woese C.R."/>
            <person name="Venter J.C."/>
        </authorList>
    </citation>
    <scope>NUCLEOTIDE SEQUENCE [LARGE SCALE GENOMIC DNA]</scope>
    <source>
        <strain>ATCC 49558 / DSM 4304 / JCM 9628 / NBRC 100126 / VC-16</strain>
    </source>
</reference>
<reference key="2">
    <citation type="journal article" date="2007" name="J. Mol. Biol.">
        <title>Structure of an amide bond forming F(420):gamma-glutamyl ligase from Archaeoglobus fulgidus -- a member of a new family of non-ribosomal peptide synthases.</title>
        <authorList>
            <person name="Nocek B."/>
            <person name="Evdokimova E."/>
            <person name="Proudfoot M."/>
            <person name="Kudritska M."/>
            <person name="Grochowski L.L."/>
            <person name="White R.H."/>
            <person name="Savchenko A."/>
            <person name="Yakunin A.F."/>
            <person name="Edwards A."/>
            <person name="Joachimiak A."/>
        </authorList>
    </citation>
    <scope>X-RAY CRYSTALLOGRAPHY (1.35 ANGSTROMS) OF APOENZYME AND IN COMPLEX WITH GDP AND MN(2+)</scope>
    <scope>FUNCTION</scope>
    <scope>CATALYTIC ACTIVITY</scope>
    <scope>COFACTOR</scope>
    <scope>SUBUNIT</scope>
    <source>
        <strain>ATCC 49558 / DSM 4304 / JCM 9628 / NBRC 100126 / VC-16</strain>
    </source>
</reference>